<feature type="chain" id="PRO_1000060902" description="Probable sugar efflux transporter">
    <location>
        <begin position="1"/>
        <end position="396"/>
    </location>
</feature>
<feature type="transmembrane region" description="Helical" evidence="1">
    <location>
        <begin position="15"/>
        <end position="35"/>
    </location>
</feature>
<feature type="transmembrane region" description="Helical" evidence="1">
    <location>
        <begin position="50"/>
        <end position="70"/>
    </location>
</feature>
<feature type="transmembrane region" description="Helical" evidence="1">
    <location>
        <begin position="81"/>
        <end position="101"/>
    </location>
</feature>
<feature type="transmembrane region" description="Helical" evidence="1">
    <location>
        <begin position="103"/>
        <end position="123"/>
    </location>
</feature>
<feature type="transmembrane region" description="Helical" evidence="1">
    <location>
        <begin position="136"/>
        <end position="156"/>
    </location>
</feature>
<feature type="transmembrane region" description="Helical" evidence="1">
    <location>
        <begin position="165"/>
        <end position="185"/>
    </location>
</feature>
<feature type="transmembrane region" description="Helical" evidence="1">
    <location>
        <begin position="209"/>
        <end position="229"/>
    </location>
</feature>
<feature type="transmembrane region" description="Helical" evidence="1">
    <location>
        <begin position="246"/>
        <end position="266"/>
    </location>
</feature>
<feature type="transmembrane region" description="Helical" evidence="1">
    <location>
        <begin position="276"/>
        <end position="296"/>
    </location>
</feature>
<feature type="transmembrane region" description="Helical" evidence="1">
    <location>
        <begin position="298"/>
        <end position="318"/>
    </location>
</feature>
<feature type="transmembrane region" description="Helical" evidence="1">
    <location>
        <begin position="333"/>
        <end position="353"/>
    </location>
</feature>
<feature type="transmembrane region" description="Helical" evidence="1">
    <location>
        <begin position="362"/>
        <end position="382"/>
    </location>
</feature>
<reference key="1">
    <citation type="submission" date="2007-06" db="EMBL/GenBank/DDBJ databases">
        <authorList>
            <person name="Dodson R.J."/>
            <person name="Harkins D."/>
            <person name="Paulsen I.T."/>
        </authorList>
    </citation>
    <scope>NUCLEOTIDE SEQUENCE [LARGE SCALE GENOMIC DNA]</scope>
    <source>
        <strain>DSM 24068 / PA7</strain>
    </source>
</reference>
<gene>
    <name evidence="1" type="primary">sotB</name>
    <name type="ordered locus">PSPA7_0980</name>
</gene>
<comment type="function">
    <text evidence="1">Involved in the efflux of sugars. The physiological role may be the reduction of the intracellular concentration of toxic sugars or sugar metabolites.</text>
</comment>
<comment type="subcellular location">
    <subcellularLocation>
        <location evidence="1">Cell inner membrane</location>
        <topology evidence="1">Multi-pass membrane protein</topology>
    </subcellularLocation>
</comment>
<comment type="similarity">
    <text evidence="1">Belongs to the major facilitator superfamily. SotB (TC 2.A.1.2) family.</text>
</comment>
<sequence length="396" mass="41890">MHSTSETRSGSWLSVIALALAAFIFNTTEFVPVGLLSDIGHSFDMPTSQVGLMLTIYAWVVSLASLPMMLLTRNIERRKLLVGVFLLFIASHVLSGLAWNFPVLMLSRIGIAFAHAVFWAITASLAVRVAPPGQQAKALGLLATGTTLAMVLGIPLGRVVGEALGWRTTFMAIAGLSVLTLLYLVRSLPPLPSQNSGSLRSLPMLFRRPALVCLYILTVVVISAQFTAYSYIEPFARQVAQMGGEATTLLLLLFGGAGIFGSLLFSRYSEAFPRGFLLAAILALGTSLALLLPFSAQPTWLMALSVLWGMSIMCFGLAQQSRVLRLASDATDVAMALFSGLYNVGIGAGALLGSVVSERLGLAAIGYVGAALALAGLLLALFTALRYAGALKTTSL</sequence>
<organism>
    <name type="scientific">Pseudomonas paraeruginosa (strain DSM 24068 / PA7)</name>
    <name type="common">Pseudomonas aeruginosa (strain PA7)</name>
    <dbReference type="NCBI Taxonomy" id="381754"/>
    <lineage>
        <taxon>Bacteria</taxon>
        <taxon>Pseudomonadati</taxon>
        <taxon>Pseudomonadota</taxon>
        <taxon>Gammaproteobacteria</taxon>
        <taxon>Pseudomonadales</taxon>
        <taxon>Pseudomonadaceae</taxon>
        <taxon>Pseudomonas</taxon>
        <taxon>Pseudomonas paraeruginosa</taxon>
    </lineage>
</organism>
<proteinExistence type="inferred from homology"/>
<dbReference type="EMBL" id="CP000744">
    <property type="protein sequence ID" value="ABR83977.1"/>
    <property type="molecule type" value="Genomic_DNA"/>
</dbReference>
<dbReference type="RefSeq" id="WP_003157060.1">
    <property type="nucleotide sequence ID" value="NC_009656.1"/>
</dbReference>
<dbReference type="SMR" id="A6UZY0"/>
<dbReference type="KEGG" id="pap:PSPA7_0980"/>
<dbReference type="HOGENOM" id="CLU_001265_61_1_6"/>
<dbReference type="Proteomes" id="UP000001582">
    <property type="component" value="Chromosome"/>
</dbReference>
<dbReference type="GO" id="GO:0005886">
    <property type="term" value="C:plasma membrane"/>
    <property type="evidence" value="ECO:0007669"/>
    <property type="project" value="UniProtKB-SubCell"/>
</dbReference>
<dbReference type="GO" id="GO:0015144">
    <property type="term" value="F:carbohydrate transmembrane transporter activity"/>
    <property type="evidence" value="ECO:0007669"/>
    <property type="project" value="UniProtKB-UniRule"/>
</dbReference>
<dbReference type="CDD" id="cd17324">
    <property type="entry name" value="MFS_NepI_like"/>
    <property type="match status" value="1"/>
</dbReference>
<dbReference type="Gene3D" id="1.20.1250.20">
    <property type="entry name" value="MFS general substrate transporter like domains"/>
    <property type="match status" value="1"/>
</dbReference>
<dbReference type="HAMAP" id="MF_00517">
    <property type="entry name" value="MFS_SotB"/>
    <property type="match status" value="1"/>
</dbReference>
<dbReference type="InterPro" id="IPR011701">
    <property type="entry name" value="MFS"/>
</dbReference>
<dbReference type="InterPro" id="IPR020846">
    <property type="entry name" value="MFS_dom"/>
</dbReference>
<dbReference type="InterPro" id="IPR050189">
    <property type="entry name" value="MFS_Efflux_Transporters"/>
</dbReference>
<dbReference type="InterPro" id="IPR036259">
    <property type="entry name" value="MFS_trans_sf"/>
</dbReference>
<dbReference type="InterPro" id="IPR023495">
    <property type="entry name" value="Sugar_effux_transptr_put"/>
</dbReference>
<dbReference type="NCBIfam" id="NF002921">
    <property type="entry name" value="PRK03545.1"/>
    <property type="match status" value="1"/>
</dbReference>
<dbReference type="PANTHER" id="PTHR43124">
    <property type="entry name" value="PURINE EFFLUX PUMP PBUE"/>
    <property type="match status" value="1"/>
</dbReference>
<dbReference type="PANTHER" id="PTHR43124:SF4">
    <property type="entry name" value="SUGAR EFFLUX TRANSPORTER"/>
    <property type="match status" value="1"/>
</dbReference>
<dbReference type="Pfam" id="PF07690">
    <property type="entry name" value="MFS_1"/>
    <property type="match status" value="1"/>
</dbReference>
<dbReference type="SUPFAM" id="SSF103473">
    <property type="entry name" value="MFS general substrate transporter"/>
    <property type="match status" value="1"/>
</dbReference>
<dbReference type="PROSITE" id="PS50850">
    <property type="entry name" value="MFS"/>
    <property type="match status" value="1"/>
</dbReference>
<evidence type="ECO:0000255" key="1">
    <source>
        <dbReference type="HAMAP-Rule" id="MF_00517"/>
    </source>
</evidence>
<protein>
    <recommendedName>
        <fullName evidence="1">Probable sugar efflux transporter</fullName>
    </recommendedName>
</protein>
<name>SOTB_PSEP7</name>
<keyword id="KW-0997">Cell inner membrane</keyword>
<keyword id="KW-1003">Cell membrane</keyword>
<keyword id="KW-0472">Membrane</keyword>
<keyword id="KW-0762">Sugar transport</keyword>
<keyword id="KW-0812">Transmembrane</keyword>
<keyword id="KW-1133">Transmembrane helix</keyword>
<keyword id="KW-0813">Transport</keyword>
<accession>A6UZY0</accession>